<evidence type="ECO:0000255" key="1">
    <source>
        <dbReference type="HAMAP-Rule" id="MF_00011"/>
    </source>
</evidence>
<proteinExistence type="inferred from homology"/>
<protein>
    <recommendedName>
        <fullName evidence="1">Adenylosuccinate synthetase</fullName>
        <shortName evidence="1">AMPSase</shortName>
        <shortName evidence="1">AdSS</shortName>
        <ecNumber evidence="1">6.3.4.4</ecNumber>
    </recommendedName>
    <alternativeName>
        <fullName evidence="1">IMP--aspartate ligase</fullName>
    </alternativeName>
</protein>
<sequence>MANVVVVGAQWGDEGKGKVVDIYTEHADDVVRYQGGNNAGHTLVVGEEKVVLHLIPSGILHEGKRCIIGNGVVLDPEVFIQEITRLKDKGRLKDDRALLVSESIHIIMPYHKRIDIAREAKSGEKKIGTTGRGIGPTYEDKIGRRGIRLMDLLDRDVFARKLKENLEEKNVILEKLLGDKPFTFEEIYEQYCGYADILRNYVADTSLILYNDSKAGKKLLFEGAQGTLLDVDHGTYPFVTSSSTCAGGACTGTGVSPRDIHEIIGISKAYVTRVGSGPFPTELLDADGEKLRQVGHEFGATTGRPRRCGWFDAMVVRYAVRVNGLTGVALTKLDVLNDFETIKVCTGYTFEGKPLADLPANLAVFEKCEPVYEELPGWMSDISGARTFEELPEKAKSYVKRLEQLIGCPIVLVSIGPRRDQTIIISNPFQDKV</sequence>
<reference key="1">
    <citation type="journal article" date="2003" name="Science">
        <title>Genome of Geobacter sulfurreducens: metal reduction in subsurface environments.</title>
        <authorList>
            <person name="Methe B.A."/>
            <person name="Nelson K.E."/>
            <person name="Eisen J.A."/>
            <person name="Paulsen I.T."/>
            <person name="Nelson W.C."/>
            <person name="Heidelberg J.F."/>
            <person name="Wu D."/>
            <person name="Wu M."/>
            <person name="Ward N.L."/>
            <person name="Beanan M.J."/>
            <person name="Dodson R.J."/>
            <person name="Madupu R."/>
            <person name="Brinkac L.M."/>
            <person name="Daugherty S.C."/>
            <person name="DeBoy R.T."/>
            <person name="Durkin A.S."/>
            <person name="Gwinn M.L."/>
            <person name="Kolonay J.F."/>
            <person name="Sullivan S.A."/>
            <person name="Haft D.H."/>
            <person name="Selengut J."/>
            <person name="Davidsen T.M."/>
            <person name="Zafar N."/>
            <person name="White O."/>
            <person name="Tran B."/>
            <person name="Romero C."/>
            <person name="Forberger H.A."/>
            <person name="Weidman J.F."/>
            <person name="Khouri H.M."/>
            <person name="Feldblyum T.V."/>
            <person name="Utterback T.R."/>
            <person name="Van Aken S.E."/>
            <person name="Lovley D.R."/>
            <person name="Fraser C.M."/>
        </authorList>
    </citation>
    <scope>NUCLEOTIDE SEQUENCE [LARGE SCALE GENOMIC DNA]</scope>
    <source>
        <strain>ATCC 51573 / DSM 12127 / PCA</strain>
    </source>
</reference>
<dbReference type="EC" id="6.3.4.4" evidence="1"/>
<dbReference type="EMBL" id="AE017180">
    <property type="protein sequence ID" value="AAR36698.1"/>
    <property type="molecule type" value="Genomic_DNA"/>
</dbReference>
<dbReference type="RefSeq" id="NP_954348.1">
    <property type="nucleotide sequence ID" value="NC_002939.5"/>
</dbReference>
<dbReference type="RefSeq" id="WP_010943920.1">
    <property type="nucleotide sequence ID" value="NC_002939.5"/>
</dbReference>
<dbReference type="SMR" id="Q747F9"/>
<dbReference type="FunCoup" id="Q747F9">
    <property type="interactions" value="586"/>
</dbReference>
<dbReference type="STRING" id="243231.GSU3308"/>
<dbReference type="EnsemblBacteria" id="AAR36698">
    <property type="protein sequence ID" value="AAR36698"/>
    <property type="gene ID" value="GSU3308"/>
</dbReference>
<dbReference type="KEGG" id="gsu:GSU3308"/>
<dbReference type="PATRIC" id="fig|243231.5.peg.3326"/>
<dbReference type="eggNOG" id="COG0104">
    <property type="taxonomic scope" value="Bacteria"/>
</dbReference>
<dbReference type="HOGENOM" id="CLU_029848_0_0_7"/>
<dbReference type="InParanoid" id="Q747F9"/>
<dbReference type="OrthoDB" id="9807553at2"/>
<dbReference type="UniPathway" id="UPA00075">
    <property type="reaction ID" value="UER00335"/>
</dbReference>
<dbReference type="Proteomes" id="UP000000577">
    <property type="component" value="Chromosome"/>
</dbReference>
<dbReference type="GO" id="GO:0005737">
    <property type="term" value="C:cytoplasm"/>
    <property type="evidence" value="ECO:0000318"/>
    <property type="project" value="GO_Central"/>
</dbReference>
<dbReference type="GO" id="GO:0004019">
    <property type="term" value="F:adenylosuccinate synthase activity"/>
    <property type="evidence" value="ECO:0000318"/>
    <property type="project" value="GO_Central"/>
</dbReference>
<dbReference type="GO" id="GO:0005525">
    <property type="term" value="F:GTP binding"/>
    <property type="evidence" value="ECO:0007669"/>
    <property type="project" value="UniProtKB-UniRule"/>
</dbReference>
<dbReference type="GO" id="GO:0000287">
    <property type="term" value="F:magnesium ion binding"/>
    <property type="evidence" value="ECO:0007669"/>
    <property type="project" value="UniProtKB-UniRule"/>
</dbReference>
<dbReference type="GO" id="GO:0044208">
    <property type="term" value="P:'de novo' AMP biosynthetic process"/>
    <property type="evidence" value="ECO:0000318"/>
    <property type="project" value="GO_Central"/>
</dbReference>
<dbReference type="GO" id="GO:0046040">
    <property type="term" value="P:IMP metabolic process"/>
    <property type="evidence" value="ECO:0000318"/>
    <property type="project" value="GO_Central"/>
</dbReference>
<dbReference type="CDD" id="cd03108">
    <property type="entry name" value="AdSS"/>
    <property type="match status" value="1"/>
</dbReference>
<dbReference type="FunFam" id="1.10.300.10:FF:000001">
    <property type="entry name" value="Adenylosuccinate synthetase"/>
    <property type="match status" value="1"/>
</dbReference>
<dbReference type="FunFam" id="3.90.170.10:FF:000001">
    <property type="entry name" value="Adenylosuccinate synthetase"/>
    <property type="match status" value="1"/>
</dbReference>
<dbReference type="Gene3D" id="3.40.440.10">
    <property type="entry name" value="Adenylosuccinate Synthetase, subunit A, domain 1"/>
    <property type="match status" value="1"/>
</dbReference>
<dbReference type="Gene3D" id="1.10.300.10">
    <property type="entry name" value="Adenylosuccinate Synthetase, subunit A, domain 2"/>
    <property type="match status" value="1"/>
</dbReference>
<dbReference type="Gene3D" id="3.90.170.10">
    <property type="entry name" value="Adenylosuccinate Synthetase, subunit A, domain 3"/>
    <property type="match status" value="1"/>
</dbReference>
<dbReference type="HAMAP" id="MF_00011">
    <property type="entry name" value="Adenylosucc_synth"/>
    <property type="match status" value="1"/>
</dbReference>
<dbReference type="InterPro" id="IPR018220">
    <property type="entry name" value="Adenylosuccin_syn_GTP-bd"/>
</dbReference>
<dbReference type="InterPro" id="IPR033128">
    <property type="entry name" value="Adenylosuccin_syn_Lys_AS"/>
</dbReference>
<dbReference type="InterPro" id="IPR042109">
    <property type="entry name" value="Adenylosuccinate_synth_dom1"/>
</dbReference>
<dbReference type="InterPro" id="IPR042110">
    <property type="entry name" value="Adenylosuccinate_synth_dom2"/>
</dbReference>
<dbReference type="InterPro" id="IPR042111">
    <property type="entry name" value="Adenylosuccinate_synth_dom3"/>
</dbReference>
<dbReference type="InterPro" id="IPR001114">
    <property type="entry name" value="Adenylosuccinate_synthetase"/>
</dbReference>
<dbReference type="InterPro" id="IPR027417">
    <property type="entry name" value="P-loop_NTPase"/>
</dbReference>
<dbReference type="NCBIfam" id="NF002223">
    <property type="entry name" value="PRK01117.1"/>
    <property type="match status" value="1"/>
</dbReference>
<dbReference type="NCBIfam" id="TIGR00184">
    <property type="entry name" value="purA"/>
    <property type="match status" value="1"/>
</dbReference>
<dbReference type="PANTHER" id="PTHR11846">
    <property type="entry name" value="ADENYLOSUCCINATE SYNTHETASE"/>
    <property type="match status" value="1"/>
</dbReference>
<dbReference type="PANTHER" id="PTHR11846:SF0">
    <property type="entry name" value="ADENYLOSUCCINATE SYNTHETASE"/>
    <property type="match status" value="1"/>
</dbReference>
<dbReference type="Pfam" id="PF00709">
    <property type="entry name" value="Adenylsucc_synt"/>
    <property type="match status" value="1"/>
</dbReference>
<dbReference type="SMART" id="SM00788">
    <property type="entry name" value="Adenylsucc_synt"/>
    <property type="match status" value="1"/>
</dbReference>
<dbReference type="SUPFAM" id="SSF52540">
    <property type="entry name" value="P-loop containing nucleoside triphosphate hydrolases"/>
    <property type="match status" value="1"/>
</dbReference>
<dbReference type="PROSITE" id="PS01266">
    <property type="entry name" value="ADENYLOSUCCIN_SYN_1"/>
    <property type="match status" value="1"/>
</dbReference>
<dbReference type="PROSITE" id="PS00513">
    <property type="entry name" value="ADENYLOSUCCIN_SYN_2"/>
    <property type="match status" value="1"/>
</dbReference>
<feature type="chain" id="PRO_0000224283" description="Adenylosuccinate synthetase">
    <location>
        <begin position="1"/>
        <end position="433"/>
    </location>
</feature>
<feature type="active site" description="Proton acceptor" evidence="1">
    <location>
        <position position="13"/>
    </location>
</feature>
<feature type="active site" description="Proton donor" evidence="1">
    <location>
        <position position="41"/>
    </location>
</feature>
<feature type="binding site" evidence="1">
    <location>
        <begin position="12"/>
        <end position="18"/>
    </location>
    <ligand>
        <name>GTP</name>
        <dbReference type="ChEBI" id="CHEBI:37565"/>
    </ligand>
</feature>
<feature type="binding site" description="in other chain" evidence="1">
    <location>
        <begin position="13"/>
        <end position="16"/>
    </location>
    <ligand>
        <name>IMP</name>
        <dbReference type="ChEBI" id="CHEBI:58053"/>
        <note>ligand shared between dimeric partners</note>
    </ligand>
</feature>
<feature type="binding site" evidence="1">
    <location>
        <position position="13"/>
    </location>
    <ligand>
        <name>Mg(2+)</name>
        <dbReference type="ChEBI" id="CHEBI:18420"/>
    </ligand>
</feature>
<feature type="binding site" description="in other chain" evidence="1">
    <location>
        <begin position="38"/>
        <end position="41"/>
    </location>
    <ligand>
        <name>IMP</name>
        <dbReference type="ChEBI" id="CHEBI:58053"/>
        <note>ligand shared between dimeric partners</note>
    </ligand>
</feature>
<feature type="binding site" evidence="1">
    <location>
        <begin position="40"/>
        <end position="42"/>
    </location>
    <ligand>
        <name>GTP</name>
        <dbReference type="ChEBI" id="CHEBI:37565"/>
    </ligand>
</feature>
<feature type="binding site" evidence="1">
    <location>
        <position position="40"/>
    </location>
    <ligand>
        <name>Mg(2+)</name>
        <dbReference type="ChEBI" id="CHEBI:18420"/>
    </ligand>
</feature>
<feature type="binding site" description="in other chain" evidence="1">
    <location>
        <position position="130"/>
    </location>
    <ligand>
        <name>IMP</name>
        <dbReference type="ChEBI" id="CHEBI:58053"/>
        <note>ligand shared between dimeric partners</note>
    </ligand>
</feature>
<feature type="binding site" evidence="1">
    <location>
        <position position="144"/>
    </location>
    <ligand>
        <name>IMP</name>
        <dbReference type="ChEBI" id="CHEBI:58053"/>
        <note>ligand shared between dimeric partners</note>
    </ligand>
</feature>
<feature type="binding site" description="in other chain" evidence="1">
    <location>
        <position position="225"/>
    </location>
    <ligand>
        <name>IMP</name>
        <dbReference type="ChEBI" id="CHEBI:58053"/>
        <note>ligand shared between dimeric partners</note>
    </ligand>
</feature>
<feature type="binding site" description="in other chain" evidence="1">
    <location>
        <position position="240"/>
    </location>
    <ligand>
        <name>IMP</name>
        <dbReference type="ChEBI" id="CHEBI:58053"/>
        <note>ligand shared between dimeric partners</note>
    </ligand>
</feature>
<feature type="binding site" evidence="1">
    <location>
        <begin position="300"/>
        <end position="306"/>
    </location>
    <ligand>
        <name>substrate</name>
    </ligand>
</feature>
<feature type="binding site" description="in other chain" evidence="1">
    <location>
        <position position="304"/>
    </location>
    <ligand>
        <name>IMP</name>
        <dbReference type="ChEBI" id="CHEBI:58053"/>
        <note>ligand shared between dimeric partners</note>
    </ligand>
</feature>
<feature type="binding site" evidence="1">
    <location>
        <position position="306"/>
    </location>
    <ligand>
        <name>GTP</name>
        <dbReference type="ChEBI" id="CHEBI:37565"/>
    </ligand>
</feature>
<feature type="binding site" evidence="1">
    <location>
        <begin position="332"/>
        <end position="334"/>
    </location>
    <ligand>
        <name>GTP</name>
        <dbReference type="ChEBI" id="CHEBI:37565"/>
    </ligand>
</feature>
<feature type="binding site" evidence="1">
    <location>
        <begin position="414"/>
        <end position="416"/>
    </location>
    <ligand>
        <name>GTP</name>
        <dbReference type="ChEBI" id="CHEBI:37565"/>
    </ligand>
</feature>
<keyword id="KW-0963">Cytoplasm</keyword>
<keyword id="KW-0342">GTP-binding</keyword>
<keyword id="KW-0436">Ligase</keyword>
<keyword id="KW-0460">Magnesium</keyword>
<keyword id="KW-0479">Metal-binding</keyword>
<keyword id="KW-0547">Nucleotide-binding</keyword>
<keyword id="KW-0658">Purine biosynthesis</keyword>
<keyword id="KW-1185">Reference proteome</keyword>
<organism>
    <name type="scientific">Geobacter sulfurreducens (strain ATCC 51573 / DSM 12127 / PCA)</name>
    <dbReference type="NCBI Taxonomy" id="243231"/>
    <lineage>
        <taxon>Bacteria</taxon>
        <taxon>Pseudomonadati</taxon>
        <taxon>Thermodesulfobacteriota</taxon>
        <taxon>Desulfuromonadia</taxon>
        <taxon>Geobacterales</taxon>
        <taxon>Geobacteraceae</taxon>
        <taxon>Geobacter</taxon>
    </lineage>
</organism>
<comment type="function">
    <text evidence="1">Plays an important role in the de novo pathway of purine nucleotide biosynthesis. Catalyzes the first committed step in the biosynthesis of AMP from IMP.</text>
</comment>
<comment type="catalytic activity">
    <reaction evidence="1">
        <text>IMP + L-aspartate + GTP = N(6)-(1,2-dicarboxyethyl)-AMP + GDP + phosphate + 2 H(+)</text>
        <dbReference type="Rhea" id="RHEA:15753"/>
        <dbReference type="ChEBI" id="CHEBI:15378"/>
        <dbReference type="ChEBI" id="CHEBI:29991"/>
        <dbReference type="ChEBI" id="CHEBI:37565"/>
        <dbReference type="ChEBI" id="CHEBI:43474"/>
        <dbReference type="ChEBI" id="CHEBI:57567"/>
        <dbReference type="ChEBI" id="CHEBI:58053"/>
        <dbReference type="ChEBI" id="CHEBI:58189"/>
        <dbReference type="EC" id="6.3.4.4"/>
    </reaction>
</comment>
<comment type="cofactor">
    <cofactor evidence="1">
        <name>Mg(2+)</name>
        <dbReference type="ChEBI" id="CHEBI:18420"/>
    </cofactor>
    <text evidence="1">Binds 1 Mg(2+) ion per subunit.</text>
</comment>
<comment type="pathway">
    <text evidence="1">Purine metabolism; AMP biosynthesis via de novo pathway; AMP from IMP: step 1/2.</text>
</comment>
<comment type="subunit">
    <text evidence="1">Homodimer.</text>
</comment>
<comment type="subcellular location">
    <subcellularLocation>
        <location evidence="1">Cytoplasm</location>
    </subcellularLocation>
</comment>
<comment type="similarity">
    <text evidence="1">Belongs to the adenylosuccinate synthetase family.</text>
</comment>
<accession>Q747F9</accession>
<name>PURA_GEOSL</name>
<gene>
    <name evidence="1" type="primary">purA</name>
    <name type="ordered locus">GSU3308</name>
</gene>